<sequence>MTVDTITSTSNGNQDVPKEFLPIEFETQLLHLGRFPDILGSCAVPVYSSAAFEFNSVAHGARLLNLTQFGNIYSRFTNPTVNVLQNRLAGLEGGVAACGVASGSAAVVVTVMALTGVGDNFVSSFHVHAGTFHQFDSLAKQMGIECRFVKSRDPADFAAAIDDKTKFVWLETISNPGNVILDLEAVSTVCHTKGIPLICDNTFGCAGYFCRPIDHGVDIVVHSATKWIGGHGTTVGGIIVDGGTFDWGQHPDRFPQFHDPRTRLWERFSRRAFAVRCQFEILRDTGSTLSAPAAQQLLVGLESLAVRCERHAQNAAKIADWLREYPLVAWVSYVGHPNHPDHQGALKYLKRGFGSVICFGLRGGFEAGALFCDALKMVITTTNLGDAKTLILHPASTTHEHFSSEHRAEAGVTDDMIRLSVGIEQIKDIKADFEQAFKQVLRGKKSLRKPCIGKILMQDEINEDLFGPSACRT</sequence>
<reference key="1">
    <citation type="journal article" date="2005" name="Genetics">
        <title>Gene clusters for insecticidal loline alkaloids in the grass-endophytic fungus Neotyphodium uncinatum.</title>
        <authorList>
            <person name="Spiering M.J."/>
            <person name="Moon C.D."/>
            <person name="Wilkinson H.H."/>
            <person name="Schardl C.L."/>
        </authorList>
    </citation>
    <scope>NUCLEOTIDE SEQUENCE [GENOMIC DNA]</scope>
    <scope>INDUCTION</scope>
    <scope>FUNCTION</scope>
    <scope>DISRUPTION PHENOTYPE</scope>
    <source>
        <strain>CBS 102646</strain>
    </source>
</reference>
<reference key="2">
    <citation type="journal article" date="2005" name="ChemBioChem">
        <title>Biosynthetic precursors of fungal pyrrolizidines, the loline alkaloids.</title>
        <authorList>
            <person name="Blankenship J.D."/>
            <person name="Houseknecht J.B."/>
            <person name="Pal S."/>
            <person name="Bush L.P."/>
            <person name="Grossman R.B."/>
            <person name="Schardl C.L."/>
        </authorList>
    </citation>
    <scope>FUNCTION</scope>
</reference>
<reference key="3">
    <citation type="journal article" date="2006" name="ChemBioChem">
        <title>On the sequence of bond formation in loline alkaloid biosynthesis.</title>
        <authorList>
            <person name="Faulkner J.R."/>
            <person name="Hussaini S.R."/>
            <person name="Blankenship J.D."/>
            <person name="Pal S."/>
            <person name="Branan B.M."/>
            <person name="Grossman R.B."/>
            <person name="Schardl C.L."/>
        </authorList>
    </citation>
    <scope>FUNCTION</scope>
</reference>
<reference key="4">
    <citation type="journal article" date="2008" name="Fungal Genet. Biol.">
        <title>Role of the LolP cytochrome P450 monooxygenase in loline alkaloid biosynthesis.</title>
        <authorList>
            <person name="Spiering M.J."/>
            <person name="Faulkner J.R."/>
            <person name="Zhang D.X."/>
            <person name="Machado C."/>
            <person name="Grossman R.B."/>
            <person name="Schardl C.L."/>
        </authorList>
    </citation>
    <scope>FUNCTION</scope>
    <source>
        <strain>CBS 102646</strain>
    </source>
</reference>
<reference key="5">
    <citation type="journal article" date="2014" name="Phytochemistry">
        <title>Ether bridge formation in loline alkaloid biosynthesis.</title>
        <authorList>
            <person name="Pan J."/>
            <person name="Bhardwaj M."/>
            <person name="Faulkner J.R."/>
            <person name="Nagabhyru P."/>
            <person name="Charlton N.D."/>
            <person name="Higashi R.M."/>
            <person name="Miller A.F."/>
            <person name="Young C.A."/>
            <person name="Grossman R.B."/>
            <person name="Schardl C.L."/>
        </authorList>
    </citation>
    <scope>FUNCTION</scope>
</reference>
<reference key="6">
    <citation type="journal article" date="2014" name="PLoS ONE">
        <title>Enzymes from fungal and plant origin required for chemical diversification of insecticidal loline alkaloids in grass-Epichloe symbiota.</title>
        <authorList>
            <person name="Pan J."/>
            <person name="Bhardwaj M."/>
            <person name="Nagabhyru P."/>
            <person name="Grossman R.B."/>
            <person name="Schardl C.L."/>
        </authorList>
    </citation>
    <scope>FUNCTION</scope>
    <scope>BIOTECHNOLOGY</scope>
</reference>
<reference key="7">
    <citation type="journal article" date="2018" name="Biochemistry">
        <title>Installation of the ether bridge of lolines by the iron- and 2-oxoglutarate-dependent oxygenase, lolO: regio- and stereochemistry of sequential hydroxylation and oxacyclization reactions.</title>
        <authorList>
            <person name="Pan J."/>
            <person name="Bhardwaj M."/>
            <person name="Zhang B."/>
            <person name="Chang W.C."/>
            <person name="Schardl C.L."/>
            <person name="Krebs C."/>
            <person name="Grossman R.B."/>
            <person name="Bollinger J.M. Jr."/>
        </authorList>
    </citation>
    <scope>FUNCTION</scope>
</reference>
<accession>Q5MNH8</accession>
<organism>
    <name type="scientific">Epichloe uncinata</name>
    <name type="common">Endophyte fungus</name>
    <name type="synonym">Neotyphodium uncinatum</name>
    <dbReference type="NCBI Taxonomy" id="5050"/>
    <lineage>
        <taxon>Eukaryota</taxon>
        <taxon>Fungi</taxon>
        <taxon>Dikarya</taxon>
        <taxon>Ascomycota</taxon>
        <taxon>Pezizomycotina</taxon>
        <taxon>Sordariomycetes</taxon>
        <taxon>Hypocreomycetidae</taxon>
        <taxon>Hypocreales</taxon>
        <taxon>Clavicipitaceae</taxon>
        <taxon>Epichloe</taxon>
    </lineage>
</organism>
<name>LOLC2_EPIUN</name>
<comment type="function">
    <text evidence="3 4 5 6 7 8 9">Sulfhydrylase-like protein; part of the gene cluster that mediates the biosynthesis of loline alkaloids, potent insecticidal agents composed of a pyrrolizidine ring system and an uncommon ether bridge linking carbons 2 and 7 (PubMed:15654104). Lolines are structurally differentiated by the various modifications of the L-amino group and include norloline, loline, N-methylloline, N-acetylloline, N-acetylnorloline, and N-formylloline (PubMed:15861432, PubMed:25531527). The first committed step is the condensation of O-acetyl-L-homoserine (derived from L-aspartic acid) and L-proline, probably catalyzed by the gamma-type pyridoxal 5'-phosphate(PLP)-dependent enzyme lolC, to give the diamino diacid, NACPP (PubMed:15861432, PubMed:16755627). Ensuing cyclization, decarboxylation, and acetylation steps yield 1-exo-acetamidopyrrolizidine (AcAP) (PubMed:24374065). LolO is required for installation of the ether bridge upon the pathway intermediate, 1-exo-acetamidopyrrolizidine (AcAP) (PubMed:29537853). In sequential 2-oxoglutarate- and O(2)-consuming steps, lolO removes hydrogens from C2 and C7 of AcAP to form both carbon-oxygen bonds in N-acetylnorloline (NANL), the precursor to all other lolines (PubMed:24374065, PubMed:29537853). The enzymes lolD, lolE, lolF and lolT have also been proposed to be involved in the ether-bridge installation (PubMed:15654104). Further processing of the exocyclic moiety of NANL by fungal N-acetamidase (LolN), methyltransferase (LolM), and cytochrome P450 (LolP) enzymes, with occasional involvement of a plant acetyltransferase, generates the other known lolines (PubMed:18655839, PubMed:25531527). LolN transforms NANL to norlonine which is monomethylated and dimethylated to respectively lonine and N-methyllonine (NML) by lolM (PubMed:25531527). LolP catalyzes hydroxylation of the methyl group in N-methylloline (NML) and further oxygenation to N-formylloline (NFL) (PubMed:18655839). A plant acetyltransferase is responsible for the acetylation of loline to form N-acetylloline (NAL) (PubMed:25531527). LolA might interact with aspartate kinase to prevent feedback inhibition of its activity by these end products and thereby promote production of L-homoserine from L-aspartate (PubMed:15654104).</text>
</comment>
<comment type="cofactor">
    <cofactor evidence="2">
        <name>pyridoxal 5'-phosphate</name>
        <dbReference type="ChEBI" id="CHEBI:597326"/>
    </cofactor>
</comment>
<comment type="pathway">
    <text evidence="12">Alkaloid biosynthesis.</text>
</comment>
<comment type="induction">
    <text evidence="3">Expression is induced in loline alkaloid-producing cultures as well as in planta (PubMed:15654104).</text>
</comment>
<comment type="disruption phenotype">
    <text evidence="3">Significantly decreases loline-alkaloid production (PubMed:15654104).</text>
</comment>
<comment type="biotechnology">
    <text evidence="13">Loline alkaloids show broad-spectrum anti-insect activity, and different lolines may have different biological activities (PubMed:25531527). In vitro tests of NFL, NAL, NML, and semisynthetic loline derivatives with long carbon-chain acylations on the 1-amine have shown that many are effective against both fall armyworm larvae and European corn borer larvae, but the effects seem to differ depending on the modifications (PubMed:25531527). N-Formylloline reduces the weight gain of fall armyworms by deterring feeding, and does not significantly affect corn borers (PubMed:25531527). In contrast, NAL reduces the weight gain of corn borer larvae without changing larval feeding behavior, indicating that its effect is due to metabolic toxicity. N-formylloline, NAL, and NML are almost as potent as nicotine in insecticidal activity against green bugs (PubMed:25531527).</text>
</comment>
<comment type="similarity">
    <text evidence="11">Belongs to the trans-sulfuration enzymes family.</text>
</comment>
<feature type="chain" id="PRO_0000444346" description="Sulfhydrylase-like protein lolC2">
    <location>
        <begin position="1"/>
        <end position="473"/>
    </location>
</feature>
<feature type="modified residue" description="N6-(pyridoxal phosphate)lysine" evidence="1">
    <location>
        <position position="226"/>
    </location>
</feature>
<keyword id="KW-0017">Alkaloid metabolism</keyword>
<keyword id="KW-0663">Pyridoxal phosphate</keyword>
<keyword id="KW-0808">Transferase</keyword>
<gene>
    <name evidence="10" type="primary">lolC2</name>
    <name evidence="10" type="synonym">lolC</name>
</gene>
<proteinExistence type="evidence at transcript level"/>
<dbReference type="EC" id="2.5.1.-" evidence="12"/>
<dbReference type="EMBL" id="AY723750">
    <property type="protein sequence ID" value="AAV68695.1"/>
    <property type="molecule type" value="Genomic_DNA"/>
</dbReference>
<dbReference type="SMR" id="Q5MNH8"/>
<dbReference type="GO" id="GO:0005737">
    <property type="term" value="C:cytoplasm"/>
    <property type="evidence" value="ECO:0007669"/>
    <property type="project" value="TreeGrafter"/>
</dbReference>
<dbReference type="GO" id="GO:0004124">
    <property type="term" value="F:cysteine synthase activity"/>
    <property type="evidence" value="ECO:0007669"/>
    <property type="project" value="TreeGrafter"/>
</dbReference>
<dbReference type="GO" id="GO:0003961">
    <property type="term" value="F:O-acetylhomoserine aminocarboxypropyltransferase activity"/>
    <property type="evidence" value="ECO:0007669"/>
    <property type="project" value="TreeGrafter"/>
</dbReference>
<dbReference type="GO" id="GO:0030170">
    <property type="term" value="F:pyridoxal phosphate binding"/>
    <property type="evidence" value="ECO:0007669"/>
    <property type="project" value="InterPro"/>
</dbReference>
<dbReference type="GO" id="GO:0009820">
    <property type="term" value="P:alkaloid metabolic process"/>
    <property type="evidence" value="ECO:0007669"/>
    <property type="project" value="UniProtKB-KW"/>
</dbReference>
<dbReference type="GO" id="GO:0006535">
    <property type="term" value="P:cysteine biosynthetic process from serine"/>
    <property type="evidence" value="ECO:0007669"/>
    <property type="project" value="TreeGrafter"/>
</dbReference>
<dbReference type="GO" id="GO:0071269">
    <property type="term" value="P:L-homocysteine biosynthetic process"/>
    <property type="evidence" value="ECO:0007669"/>
    <property type="project" value="TreeGrafter"/>
</dbReference>
<dbReference type="GO" id="GO:0019346">
    <property type="term" value="P:transsulfuration"/>
    <property type="evidence" value="ECO:0007669"/>
    <property type="project" value="InterPro"/>
</dbReference>
<dbReference type="CDD" id="cd00614">
    <property type="entry name" value="CGS_like"/>
    <property type="match status" value="1"/>
</dbReference>
<dbReference type="FunFam" id="3.40.640.10:FF:000035">
    <property type="entry name" value="O-succinylhomoserine sulfhydrylase"/>
    <property type="match status" value="1"/>
</dbReference>
<dbReference type="Gene3D" id="3.90.1150.10">
    <property type="entry name" value="Aspartate Aminotransferase, domain 1"/>
    <property type="match status" value="1"/>
</dbReference>
<dbReference type="Gene3D" id="3.40.640.10">
    <property type="entry name" value="Type I PLP-dependent aspartate aminotransferase-like (Major domain)"/>
    <property type="match status" value="1"/>
</dbReference>
<dbReference type="InterPro" id="IPR000277">
    <property type="entry name" value="Cys/Met-Metab_PyrdxlP-dep_enz"/>
</dbReference>
<dbReference type="InterPro" id="IPR054542">
    <property type="entry name" value="Cys_met_metab_PP"/>
</dbReference>
<dbReference type="InterPro" id="IPR006235">
    <property type="entry name" value="OAc-hSer/O-AcSer_sulfhydrylase"/>
</dbReference>
<dbReference type="InterPro" id="IPR015424">
    <property type="entry name" value="PyrdxlP-dep_Trfase"/>
</dbReference>
<dbReference type="InterPro" id="IPR015421">
    <property type="entry name" value="PyrdxlP-dep_Trfase_major"/>
</dbReference>
<dbReference type="InterPro" id="IPR015422">
    <property type="entry name" value="PyrdxlP-dep_Trfase_small"/>
</dbReference>
<dbReference type="NCBIfam" id="TIGR01326">
    <property type="entry name" value="OAH_OAS_sulfhy"/>
    <property type="match status" value="1"/>
</dbReference>
<dbReference type="PANTHER" id="PTHR43797">
    <property type="entry name" value="HOMOCYSTEINE/CYSTEINE SYNTHASE"/>
    <property type="match status" value="1"/>
</dbReference>
<dbReference type="PANTHER" id="PTHR43797:SF2">
    <property type="entry name" value="HOMOCYSTEINE_CYSTEINE SYNTHASE"/>
    <property type="match status" value="1"/>
</dbReference>
<dbReference type="Pfam" id="PF01053">
    <property type="entry name" value="Cys_Met_Meta_PP"/>
    <property type="match status" value="1"/>
</dbReference>
<dbReference type="PIRSF" id="PIRSF001434">
    <property type="entry name" value="CGS"/>
    <property type="match status" value="1"/>
</dbReference>
<dbReference type="SUPFAM" id="SSF53383">
    <property type="entry name" value="PLP-dependent transferases"/>
    <property type="match status" value="1"/>
</dbReference>
<dbReference type="PROSITE" id="PS00868">
    <property type="entry name" value="CYS_MET_METAB_PP"/>
    <property type="match status" value="1"/>
</dbReference>
<protein>
    <recommendedName>
        <fullName evidence="10">Sulfhydrylase-like protein lolC2</fullName>
        <ecNumber evidence="12">2.5.1.-</ecNumber>
    </recommendedName>
    <alternativeName>
        <fullName evidence="10">Loline biosynthesis cluster 2 protein C</fullName>
    </alternativeName>
</protein>
<evidence type="ECO:0000250" key="1">
    <source>
        <dbReference type="UniProtKB" id="P06721"/>
    </source>
</evidence>
<evidence type="ECO:0000250" key="2">
    <source>
        <dbReference type="UniProtKB" id="P50125"/>
    </source>
</evidence>
<evidence type="ECO:0000269" key="3">
    <source>
    </source>
</evidence>
<evidence type="ECO:0000269" key="4">
    <source>
    </source>
</evidence>
<evidence type="ECO:0000269" key="5">
    <source>
    </source>
</evidence>
<evidence type="ECO:0000269" key="6">
    <source>
    </source>
</evidence>
<evidence type="ECO:0000269" key="7">
    <source>
    </source>
</evidence>
<evidence type="ECO:0000269" key="8">
    <source>
    </source>
</evidence>
<evidence type="ECO:0000269" key="9">
    <source>
    </source>
</evidence>
<evidence type="ECO:0000303" key="10">
    <source>
    </source>
</evidence>
<evidence type="ECO:0000305" key="11"/>
<evidence type="ECO:0000305" key="12">
    <source>
    </source>
</evidence>
<evidence type="ECO:0000305" key="13">
    <source>
    </source>
</evidence>